<sequence>MEKNVTPMIRQYLDIKKKYKDAVLFFRVGSFYEMFFDDAIEVSKLLNLTLTKRENVPMCGVPYHTSKEYIRKLILFDKKVAICEQASNSTSGGPLEREVVEVITPGVIIDEDFLNDDINNYLVAISDYKDYYSFSYIDLSTSSLGIMFYENGFFEKLKRDLEKYSPKEIIVSENFYYEYSEKLNLSRFLINRVPTWHLDKDIAIKTIKEHFNILGLSSLGFDEEKPYYISIFLIINHIKNNLKNLLSNIDKIDINNDSSYMFLDDVTQVNLELVKNNNDFSSQYSLYSVLNDCKTAMGKRLLREFILNPILNISEINTRLDHVEFFCKNISLTVTLRETFINIWDIERIISRIQMKRYIKKDFLFIEKALSVFFTVKKLFDKHNFDYWNFDKFEEDSISKVYFLINSAISSAPDELIKRGYDLKLDNLKDLKINANKYIDQYLESERLLSKINNLKIRKTNNRGLFFEVTKSNYAQVPPHFMESQALNSSKRYKTEKLISLEVDINNAEDNVVAFEQEIFDEIASNVVMHNKVLKKVAEFFAYIDLVVNFGYLAKKNEYKRPVLTSGKEILLEKSRHPVVEHYTKNTEIFTENFVRINKEKYFCLITGPNMAGKSTYLRQVALITLMAHIGSFVPASKALIGITDKIFCRIGASDNIAKGESTFLVEMNETANILRNATEKSLIIMDEVGRGTSTNDGLAIAYSIIEYILEYIKARSLFATHFHELSSINHQAFINLSMKIEKQGNDLVFLREVEEKPSLNSYGIYVARIAGLPLRVIDRANVILESLVGREGNSCLEFLPHVSSDGNDKEILKNDTDIHIKLNEYLELKNFISNIDINNITPFQSIELLNQIVLKVISQSS</sequence>
<name>MUTS_BORBZ</name>
<proteinExistence type="inferred from homology"/>
<keyword id="KW-0067">ATP-binding</keyword>
<keyword id="KW-0227">DNA damage</keyword>
<keyword id="KW-0234">DNA repair</keyword>
<keyword id="KW-0238">DNA-binding</keyword>
<keyword id="KW-0547">Nucleotide-binding</keyword>
<protein>
    <recommendedName>
        <fullName evidence="1">DNA mismatch repair protein MutS</fullName>
    </recommendedName>
</protein>
<comment type="function">
    <text evidence="1">This protein is involved in the repair of mismatches in DNA. It is possible that it carries out the mismatch recognition step. This protein has a weak ATPase activity.</text>
</comment>
<comment type="similarity">
    <text evidence="1">Belongs to the DNA mismatch repair MutS family.</text>
</comment>
<dbReference type="EMBL" id="CP001205">
    <property type="protein sequence ID" value="ACK75100.1"/>
    <property type="molecule type" value="Genomic_DNA"/>
</dbReference>
<dbReference type="RefSeq" id="WP_002657221.1">
    <property type="nucleotide sequence ID" value="NC_011728.1"/>
</dbReference>
<dbReference type="SMR" id="B7J0P3"/>
<dbReference type="GeneID" id="56567376"/>
<dbReference type="KEGG" id="bbz:BbuZS7_0827"/>
<dbReference type="HOGENOM" id="CLU_002472_3_1_12"/>
<dbReference type="Proteomes" id="UP000006901">
    <property type="component" value="Chromosome"/>
</dbReference>
<dbReference type="GO" id="GO:0005524">
    <property type="term" value="F:ATP binding"/>
    <property type="evidence" value="ECO:0007669"/>
    <property type="project" value="UniProtKB-UniRule"/>
</dbReference>
<dbReference type="GO" id="GO:0140664">
    <property type="term" value="F:ATP-dependent DNA damage sensor activity"/>
    <property type="evidence" value="ECO:0007669"/>
    <property type="project" value="InterPro"/>
</dbReference>
<dbReference type="GO" id="GO:0003684">
    <property type="term" value="F:damaged DNA binding"/>
    <property type="evidence" value="ECO:0007669"/>
    <property type="project" value="UniProtKB-UniRule"/>
</dbReference>
<dbReference type="GO" id="GO:0030983">
    <property type="term" value="F:mismatched DNA binding"/>
    <property type="evidence" value="ECO:0007669"/>
    <property type="project" value="InterPro"/>
</dbReference>
<dbReference type="GO" id="GO:0006298">
    <property type="term" value="P:mismatch repair"/>
    <property type="evidence" value="ECO:0007669"/>
    <property type="project" value="UniProtKB-UniRule"/>
</dbReference>
<dbReference type="CDD" id="cd03284">
    <property type="entry name" value="ABC_MutS1"/>
    <property type="match status" value="1"/>
</dbReference>
<dbReference type="Gene3D" id="1.10.1420.10">
    <property type="match status" value="2"/>
</dbReference>
<dbReference type="Gene3D" id="3.40.1170.10">
    <property type="entry name" value="DNA repair protein MutS, domain I"/>
    <property type="match status" value="1"/>
</dbReference>
<dbReference type="Gene3D" id="3.30.420.110">
    <property type="entry name" value="MutS, connector domain"/>
    <property type="match status" value="1"/>
</dbReference>
<dbReference type="Gene3D" id="3.40.50.300">
    <property type="entry name" value="P-loop containing nucleotide triphosphate hydrolases"/>
    <property type="match status" value="1"/>
</dbReference>
<dbReference type="HAMAP" id="MF_00096">
    <property type="entry name" value="MutS"/>
    <property type="match status" value="1"/>
</dbReference>
<dbReference type="InterPro" id="IPR005748">
    <property type="entry name" value="DNA_mismatch_repair_MutS"/>
</dbReference>
<dbReference type="InterPro" id="IPR007695">
    <property type="entry name" value="DNA_mismatch_repair_MutS-lik_N"/>
</dbReference>
<dbReference type="InterPro" id="IPR017261">
    <property type="entry name" value="DNA_mismatch_repair_MutS/MSH"/>
</dbReference>
<dbReference type="InterPro" id="IPR000432">
    <property type="entry name" value="DNA_mismatch_repair_MutS_C"/>
</dbReference>
<dbReference type="InterPro" id="IPR007861">
    <property type="entry name" value="DNA_mismatch_repair_MutS_clamp"/>
</dbReference>
<dbReference type="InterPro" id="IPR007696">
    <property type="entry name" value="DNA_mismatch_repair_MutS_core"/>
</dbReference>
<dbReference type="InterPro" id="IPR016151">
    <property type="entry name" value="DNA_mismatch_repair_MutS_N"/>
</dbReference>
<dbReference type="InterPro" id="IPR036187">
    <property type="entry name" value="DNA_mismatch_repair_MutS_sf"/>
</dbReference>
<dbReference type="InterPro" id="IPR007860">
    <property type="entry name" value="DNA_mmatch_repair_MutS_con_dom"/>
</dbReference>
<dbReference type="InterPro" id="IPR045076">
    <property type="entry name" value="MutS"/>
</dbReference>
<dbReference type="InterPro" id="IPR036678">
    <property type="entry name" value="MutS_con_dom_sf"/>
</dbReference>
<dbReference type="InterPro" id="IPR027417">
    <property type="entry name" value="P-loop_NTPase"/>
</dbReference>
<dbReference type="NCBIfam" id="TIGR01070">
    <property type="entry name" value="mutS1"/>
    <property type="match status" value="1"/>
</dbReference>
<dbReference type="NCBIfam" id="NF003810">
    <property type="entry name" value="PRK05399.1"/>
    <property type="match status" value="1"/>
</dbReference>
<dbReference type="PANTHER" id="PTHR11361:SF34">
    <property type="entry name" value="DNA MISMATCH REPAIR PROTEIN MSH1, MITOCHONDRIAL"/>
    <property type="match status" value="1"/>
</dbReference>
<dbReference type="PANTHER" id="PTHR11361">
    <property type="entry name" value="DNA MISMATCH REPAIR PROTEIN MUTS FAMILY MEMBER"/>
    <property type="match status" value="1"/>
</dbReference>
<dbReference type="Pfam" id="PF01624">
    <property type="entry name" value="MutS_I"/>
    <property type="match status" value="1"/>
</dbReference>
<dbReference type="Pfam" id="PF05188">
    <property type="entry name" value="MutS_II"/>
    <property type="match status" value="1"/>
</dbReference>
<dbReference type="Pfam" id="PF05192">
    <property type="entry name" value="MutS_III"/>
    <property type="match status" value="1"/>
</dbReference>
<dbReference type="Pfam" id="PF05190">
    <property type="entry name" value="MutS_IV"/>
    <property type="match status" value="1"/>
</dbReference>
<dbReference type="Pfam" id="PF00488">
    <property type="entry name" value="MutS_V"/>
    <property type="match status" value="1"/>
</dbReference>
<dbReference type="PIRSF" id="PIRSF037677">
    <property type="entry name" value="DNA_mis_repair_Msh6"/>
    <property type="match status" value="1"/>
</dbReference>
<dbReference type="SMART" id="SM00534">
    <property type="entry name" value="MUTSac"/>
    <property type="match status" value="1"/>
</dbReference>
<dbReference type="SMART" id="SM00533">
    <property type="entry name" value="MUTSd"/>
    <property type="match status" value="1"/>
</dbReference>
<dbReference type="SUPFAM" id="SSF55271">
    <property type="entry name" value="DNA repair protein MutS, domain I"/>
    <property type="match status" value="1"/>
</dbReference>
<dbReference type="SUPFAM" id="SSF53150">
    <property type="entry name" value="DNA repair protein MutS, domain II"/>
    <property type="match status" value="1"/>
</dbReference>
<dbReference type="SUPFAM" id="SSF48334">
    <property type="entry name" value="DNA repair protein MutS, domain III"/>
    <property type="match status" value="1"/>
</dbReference>
<dbReference type="SUPFAM" id="SSF52540">
    <property type="entry name" value="P-loop containing nucleoside triphosphate hydrolases"/>
    <property type="match status" value="1"/>
</dbReference>
<dbReference type="PROSITE" id="PS00486">
    <property type="entry name" value="DNA_MISMATCH_REPAIR_2"/>
    <property type="match status" value="1"/>
</dbReference>
<organism>
    <name type="scientific">Borreliella burgdorferi (strain ZS7)</name>
    <name type="common">Borrelia burgdorferi</name>
    <dbReference type="NCBI Taxonomy" id="445985"/>
    <lineage>
        <taxon>Bacteria</taxon>
        <taxon>Pseudomonadati</taxon>
        <taxon>Spirochaetota</taxon>
        <taxon>Spirochaetia</taxon>
        <taxon>Spirochaetales</taxon>
        <taxon>Borreliaceae</taxon>
        <taxon>Borreliella</taxon>
    </lineage>
</organism>
<reference key="1">
    <citation type="journal article" date="2011" name="J. Bacteriol.">
        <title>Whole-genome sequences of thirteen isolates of Borrelia burgdorferi.</title>
        <authorList>
            <person name="Schutzer S.E."/>
            <person name="Fraser-Liggett C.M."/>
            <person name="Casjens S.R."/>
            <person name="Qiu W.G."/>
            <person name="Dunn J.J."/>
            <person name="Mongodin E.F."/>
            <person name="Luft B.J."/>
        </authorList>
    </citation>
    <scope>NUCLEOTIDE SEQUENCE [LARGE SCALE GENOMIC DNA]</scope>
    <source>
        <strain>ZS7</strain>
    </source>
</reference>
<gene>
    <name evidence="1" type="primary">mutS</name>
    <name type="ordered locus">BbuZS7_0827</name>
</gene>
<feature type="chain" id="PRO_1000117281" description="DNA mismatch repair protein MutS">
    <location>
        <begin position="1"/>
        <end position="862"/>
    </location>
</feature>
<feature type="binding site" evidence="1">
    <location>
        <begin position="608"/>
        <end position="615"/>
    </location>
    <ligand>
        <name>ATP</name>
        <dbReference type="ChEBI" id="CHEBI:30616"/>
    </ligand>
</feature>
<accession>B7J0P3</accession>
<evidence type="ECO:0000255" key="1">
    <source>
        <dbReference type="HAMAP-Rule" id="MF_00096"/>
    </source>
</evidence>